<dbReference type="EMBL" id="AF464909">
    <property type="protein sequence ID" value="AAL75447.1"/>
    <property type="molecule type" value="mRNA"/>
</dbReference>
<dbReference type="EMBL" id="AF464910">
    <property type="protein sequence ID" value="AAL75446.1"/>
    <property type="molecule type" value="mRNA"/>
</dbReference>
<dbReference type="EMBL" id="AB091378">
    <property type="protein sequence ID" value="BAC65150.1"/>
    <property type="molecule type" value="mRNA"/>
</dbReference>
<dbReference type="EMBL" id="BK001422">
    <property type="protein sequence ID" value="DAA01467.1"/>
    <property type="molecule type" value="mRNA"/>
</dbReference>
<dbReference type="RefSeq" id="NP_872608.1">
    <property type="nucleotide sequence ID" value="NM_182667.4"/>
</dbReference>
<dbReference type="SMR" id="Q8R5I7"/>
<dbReference type="CORUM" id="Q8R5I7"/>
<dbReference type="FunCoup" id="Q8R5I7">
    <property type="interactions" value="235"/>
</dbReference>
<dbReference type="STRING" id="10116.ENSRNOP00000072988"/>
<dbReference type="GlyGen" id="Q8R5I7">
    <property type="glycosylation" value="1 site"/>
</dbReference>
<dbReference type="PhosphoSitePlus" id="Q8R5I7"/>
<dbReference type="PaxDb" id="10116-ENSRNOP00000054372"/>
<dbReference type="Ensembl" id="ENSRNOT00000057562.4">
    <property type="protein sequence ID" value="ENSRNOP00000054372.2"/>
    <property type="gene ID" value="ENSRNOG00000003669.8"/>
</dbReference>
<dbReference type="GeneID" id="246297"/>
<dbReference type="KEGG" id="rno:246297"/>
<dbReference type="UCSC" id="RGD:631347">
    <property type="organism name" value="rat"/>
</dbReference>
<dbReference type="AGR" id="RGD:631347"/>
<dbReference type="CTD" id="93649"/>
<dbReference type="RGD" id="631347">
    <property type="gene designation" value="Myocd"/>
</dbReference>
<dbReference type="eggNOG" id="ENOG502QTAN">
    <property type="taxonomic scope" value="Eukaryota"/>
</dbReference>
<dbReference type="GeneTree" id="ENSGT00950000182979"/>
<dbReference type="HOGENOM" id="CLU_007042_2_0_1"/>
<dbReference type="InParanoid" id="Q8R5I7"/>
<dbReference type="PhylomeDB" id="Q8R5I7"/>
<dbReference type="TreeFam" id="TF326024"/>
<dbReference type="PRO" id="PR:Q8R5I7"/>
<dbReference type="Proteomes" id="UP000002494">
    <property type="component" value="Chromosome 10"/>
</dbReference>
<dbReference type="Bgee" id="ENSRNOG00000003669">
    <property type="expression patterns" value="Expressed in heart and 10 other cell types or tissues"/>
</dbReference>
<dbReference type="ExpressionAtlas" id="Q8R5I7">
    <property type="expression patterns" value="baseline and differential"/>
</dbReference>
<dbReference type="GO" id="GO:0000785">
    <property type="term" value="C:chromatin"/>
    <property type="evidence" value="ECO:0000266"/>
    <property type="project" value="RGD"/>
</dbReference>
<dbReference type="GO" id="GO:0005737">
    <property type="term" value="C:cytoplasm"/>
    <property type="evidence" value="ECO:0000314"/>
    <property type="project" value="UniProtKB"/>
</dbReference>
<dbReference type="GO" id="GO:0005634">
    <property type="term" value="C:nucleus"/>
    <property type="evidence" value="ECO:0000314"/>
    <property type="project" value="UniProtKB"/>
</dbReference>
<dbReference type="GO" id="GO:0032993">
    <property type="term" value="C:protein-DNA complex"/>
    <property type="evidence" value="ECO:0000314"/>
    <property type="project" value="RGD"/>
</dbReference>
<dbReference type="GO" id="GO:0140297">
    <property type="term" value="F:DNA-binding transcription factor binding"/>
    <property type="evidence" value="ECO:0000266"/>
    <property type="project" value="RGD"/>
</dbReference>
<dbReference type="GO" id="GO:0035035">
    <property type="term" value="F:histone acetyltransferase binding"/>
    <property type="evidence" value="ECO:0000266"/>
    <property type="project" value="RGD"/>
</dbReference>
<dbReference type="GO" id="GO:0042826">
    <property type="term" value="F:histone deacetylase binding"/>
    <property type="evidence" value="ECO:0000266"/>
    <property type="project" value="RGD"/>
</dbReference>
<dbReference type="GO" id="GO:0070412">
    <property type="term" value="F:R-SMAD binding"/>
    <property type="evidence" value="ECO:0000266"/>
    <property type="project" value="RGD"/>
</dbReference>
<dbReference type="GO" id="GO:0061629">
    <property type="term" value="F:RNA polymerase II-specific DNA-binding transcription factor binding"/>
    <property type="evidence" value="ECO:0000266"/>
    <property type="project" value="RGD"/>
</dbReference>
<dbReference type="GO" id="GO:0003713">
    <property type="term" value="F:transcription coactivator activity"/>
    <property type="evidence" value="ECO:0000266"/>
    <property type="project" value="RGD"/>
</dbReference>
<dbReference type="GO" id="GO:0010659">
    <property type="term" value="P:cardiac muscle cell apoptotic process"/>
    <property type="evidence" value="ECO:0000266"/>
    <property type="project" value="RGD"/>
</dbReference>
<dbReference type="GO" id="GO:0055007">
    <property type="term" value="P:cardiac muscle cell differentiation"/>
    <property type="evidence" value="ECO:0000266"/>
    <property type="project" value="RGD"/>
</dbReference>
<dbReference type="GO" id="GO:0060379">
    <property type="term" value="P:cardiac muscle cell myoblast differentiation"/>
    <property type="evidence" value="ECO:0000266"/>
    <property type="project" value="RGD"/>
</dbReference>
<dbReference type="GO" id="GO:0060947">
    <property type="term" value="P:cardiac vascular smooth muscle cell differentiation"/>
    <property type="evidence" value="ECO:0000314"/>
    <property type="project" value="BHF-UCL"/>
</dbReference>
<dbReference type="GO" id="GO:0003231">
    <property type="term" value="P:cardiac ventricle development"/>
    <property type="evidence" value="ECO:0000266"/>
    <property type="project" value="RGD"/>
</dbReference>
<dbReference type="GO" id="GO:0061049">
    <property type="term" value="P:cell growth involved in cardiac muscle cell development"/>
    <property type="evidence" value="ECO:0000315"/>
    <property type="project" value="RGD"/>
</dbReference>
<dbReference type="GO" id="GO:0043954">
    <property type="term" value="P:cellular component maintenance"/>
    <property type="evidence" value="ECO:0000266"/>
    <property type="project" value="RGD"/>
</dbReference>
<dbReference type="GO" id="GO:1904385">
    <property type="term" value="P:cellular response to angiotensin"/>
    <property type="evidence" value="ECO:0000270"/>
    <property type="project" value="RGD"/>
</dbReference>
<dbReference type="GO" id="GO:0071363">
    <property type="term" value="P:cellular response to growth factor stimulus"/>
    <property type="evidence" value="ECO:0000270"/>
    <property type="project" value="RGD"/>
</dbReference>
<dbReference type="GO" id="GO:0071456">
    <property type="term" value="P:cellular response to hypoxia"/>
    <property type="evidence" value="ECO:0000270"/>
    <property type="project" value="RGD"/>
</dbReference>
<dbReference type="GO" id="GO:0071560">
    <property type="term" value="P:cellular response to transforming growth factor beta stimulus"/>
    <property type="evidence" value="ECO:0000270"/>
    <property type="project" value="RGD"/>
</dbReference>
<dbReference type="GO" id="GO:0006325">
    <property type="term" value="P:chromatin organization"/>
    <property type="evidence" value="ECO:0000266"/>
    <property type="project" value="RGD"/>
</dbReference>
<dbReference type="GO" id="GO:0048565">
    <property type="term" value="P:digestive tract development"/>
    <property type="evidence" value="ECO:0000266"/>
    <property type="project" value="RGD"/>
</dbReference>
<dbReference type="GO" id="GO:0097070">
    <property type="term" value="P:ductus arteriosus closure"/>
    <property type="evidence" value="ECO:0000266"/>
    <property type="project" value="RGD"/>
</dbReference>
<dbReference type="GO" id="GO:0007507">
    <property type="term" value="P:heart development"/>
    <property type="evidence" value="ECO:0000266"/>
    <property type="project" value="RGD"/>
</dbReference>
<dbReference type="GO" id="GO:0035733">
    <property type="term" value="P:hepatic stellate cell activation"/>
    <property type="evidence" value="ECO:0000315"/>
    <property type="project" value="RGD"/>
</dbReference>
<dbReference type="GO" id="GO:0048286">
    <property type="term" value="P:lung alveolus development"/>
    <property type="evidence" value="ECO:0000266"/>
    <property type="project" value="RGD"/>
</dbReference>
<dbReference type="GO" id="GO:1900222">
    <property type="term" value="P:negative regulation of amyloid-beta clearance"/>
    <property type="evidence" value="ECO:0000266"/>
    <property type="project" value="RGD"/>
</dbReference>
<dbReference type="GO" id="GO:0010667">
    <property type="term" value="P:negative regulation of cardiac muscle cell apoptotic process"/>
    <property type="evidence" value="ECO:0000266"/>
    <property type="project" value="RGD"/>
</dbReference>
<dbReference type="GO" id="GO:0060354">
    <property type="term" value="P:negative regulation of cell adhesion molecule production"/>
    <property type="evidence" value="ECO:0000266"/>
    <property type="project" value="RGD"/>
</dbReference>
<dbReference type="GO" id="GO:0008285">
    <property type="term" value="P:negative regulation of cell population proliferation"/>
    <property type="evidence" value="ECO:0000266"/>
    <property type="project" value="RGD"/>
</dbReference>
<dbReference type="GO" id="GO:0010832">
    <property type="term" value="P:negative regulation of myotube differentiation"/>
    <property type="evidence" value="ECO:0000266"/>
    <property type="project" value="RGD"/>
</dbReference>
<dbReference type="GO" id="GO:2000587">
    <property type="term" value="P:negative regulation of platelet-derived growth factor receptor-beta signaling pathway"/>
    <property type="evidence" value="ECO:0000266"/>
    <property type="project" value="RGD"/>
</dbReference>
<dbReference type="GO" id="GO:2001015">
    <property type="term" value="P:negative regulation of skeletal muscle cell differentiation"/>
    <property type="evidence" value="ECO:0000266"/>
    <property type="project" value="RGD"/>
</dbReference>
<dbReference type="GO" id="GO:0000122">
    <property type="term" value="P:negative regulation of transcription by RNA polymerase II"/>
    <property type="evidence" value="ECO:0000266"/>
    <property type="project" value="RGD"/>
</dbReference>
<dbReference type="GO" id="GO:1904753">
    <property type="term" value="P:negative regulation of vascular associated smooth muscle cell migration"/>
    <property type="evidence" value="ECO:0000266"/>
    <property type="project" value="RGD"/>
</dbReference>
<dbReference type="GO" id="GO:1904706">
    <property type="term" value="P:negative regulation of vascular associated smooth muscle cell proliferation"/>
    <property type="evidence" value="ECO:0000266"/>
    <property type="project" value="RGD"/>
</dbReference>
<dbReference type="GO" id="GO:2000727">
    <property type="term" value="P:positive regulation of cardiac muscle cell differentiation"/>
    <property type="evidence" value="ECO:0000266"/>
    <property type="project" value="RGD"/>
</dbReference>
<dbReference type="GO" id="GO:0010613">
    <property type="term" value="P:positive regulation of cardiac muscle hypertrophy"/>
    <property type="evidence" value="ECO:0000315"/>
    <property type="project" value="RGD"/>
</dbReference>
<dbReference type="GO" id="GO:0008284">
    <property type="term" value="P:positive regulation of cell population proliferation"/>
    <property type="evidence" value="ECO:0000266"/>
    <property type="project" value="RGD"/>
</dbReference>
<dbReference type="GO" id="GO:0045893">
    <property type="term" value="P:positive regulation of DNA-templated transcription"/>
    <property type="evidence" value="ECO:0000266"/>
    <property type="project" value="RGD"/>
</dbReference>
<dbReference type="GO" id="GO:0010718">
    <property type="term" value="P:positive regulation of epithelial to mesenchymal transition"/>
    <property type="evidence" value="ECO:0000315"/>
    <property type="project" value="BHF-UCL"/>
</dbReference>
<dbReference type="GO" id="GO:0010628">
    <property type="term" value="P:positive regulation of gene expression"/>
    <property type="evidence" value="ECO:0000266"/>
    <property type="project" value="RGD"/>
</dbReference>
<dbReference type="GO" id="GO:1902895">
    <property type="term" value="P:positive regulation of miRNA transcription"/>
    <property type="evidence" value="ECO:0000266"/>
    <property type="project" value="RGD"/>
</dbReference>
<dbReference type="GO" id="GO:0051152">
    <property type="term" value="P:positive regulation of smooth muscle cell differentiation"/>
    <property type="evidence" value="ECO:0000266"/>
    <property type="project" value="RGD"/>
</dbReference>
<dbReference type="GO" id="GO:0045987">
    <property type="term" value="P:positive regulation of smooth muscle contraction"/>
    <property type="evidence" value="ECO:0000266"/>
    <property type="project" value="RGD"/>
</dbReference>
<dbReference type="GO" id="GO:0045944">
    <property type="term" value="P:positive regulation of transcription by RNA polymerase II"/>
    <property type="evidence" value="ECO:0000314"/>
    <property type="project" value="BHF-UCL"/>
</dbReference>
<dbReference type="GO" id="GO:0030511">
    <property type="term" value="P:positive regulation of transforming growth factor beta receptor signaling pathway"/>
    <property type="evidence" value="ECO:0000266"/>
    <property type="project" value="RGD"/>
</dbReference>
<dbReference type="GO" id="GO:1904754">
    <property type="term" value="P:positive regulation of vascular associated smooth muscle cell migration"/>
    <property type="evidence" value="ECO:0000315"/>
    <property type="project" value="RGD"/>
</dbReference>
<dbReference type="GO" id="GO:0001560">
    <property type="term" value="P:regulation of cell growth by extracellular stimulus"/>
    <property type="evidence" value="ECO:0000266"/>
    <property type="project" value="RGD"/>
</dbReference>
<dbReference type="GO" id="GO:0045661">
    <property type="term" value="P:regulation of myoblast differentiation"/>
    <property type="evidence" value="ECO:0000266"/>
    <property type="project" value="RGD"/>
</dbReference>
<dbReference type="GO" id="GO:1900239">
    <property type="term" value="P:regulation of phenotypic switching"/>
    <property type="evidence" value="ECO:0000266"/>
    <property type="project" value="RGD"/>
</dbReference>
<dbReference type="GO" id="GO:0051150">
    <property type="term" value="P:regulation of smooth muscle cell differentiation"/>
    <property type="evidence" value="ECO:0000315"/>
    <property type="project" value="RGD"/>
</dbReference>
<dbReference type="GO" id="GO:0006357">
    <property type="term" value="P:regulation of transcription by RNA polymerase II"/>
    <property type="evidence" value="ECO:0000266"/>
    <property type="project" value="RGD"/>
</dbReference>
<dbReference type="GO" id="GO:0001666">
    <property type="term" value="P:response to hypoxia"/>
    <property type="evidence" value="ECO:0000266"/>
    <property type="project" value="RGD"/>
</dbReference>
<dbReference type="GO" id="GO:0009612">
    <property type="term" value="P:response to mechanical stimulus"/>
    <property type="evidence" value="ECO:0000270"/>
    <property type="project" value="RGD"/>
</dbReference>
<dbReference type="GO" id="GO:0035994">
    <property type="term" value="P:response to muscle stretch"/>
    <property type="evidence" value="ECO:0000270"/>
    <property type="project" value="RGD"/>
</dbReference>
<dbReference type="GO" id="GO:0051145">
    <property type="term" value="P:smooth muscle cell differentiation"/>
    <property type="evidence" value="ECO:0000315"/>
    <property type="project" value="RGD"/>
</dbReference>
<dbReference type="GO" id="GO:0006366">
    <property type="term" value="P:transcription by RNA polymerase II"/>
    <property type="evidence" value="ECO:0000266"/>
    <property type="project" value="RGD"/>
</dbReference>
<dbReference type="GO" id="GO:0045815">
    <property type="term" value="P:transcription initiation-coupled chromatin remodeling"/>
    <property type="evidence" value="ECO:0000250"/>
    <property type="project" value="UniProtKB"/>
</dbReference>
<dbReference type="GO" id="GO:0060157">
    <property type="term" value="P:urinary bladder development"/>
    <property type="evidence" value="ECO:0000266"/>
    <property type="project" value="RGD"/>
</dbReference>
<dbReference type="GO" id="GO:0060065">
    <property type="term" value="P:uterus development"/>
    <property type="evidence" value="ECO:0000266"/>
    <property type="project" value="RGD"/>
</dbReference>
<dbReference type="GO" id="GO:0035886">
    <property type="term" value="P:vascular associated smooth muscle cell differentiation"/>
    <property type="evidence" value="ECO:0000266"/>
    <property type="project" value="RGD"/>
</dbReference>
<dbReference type="GO" id="GO:0001570">
    <property type="term" value="P:vasculogenesis"/>
    <property type="evidence" value="ECO:0000266"/>
    <property type="project" value="RGD"/>
</dbReference>
<dbReference type="GO" id="GO:0055012">
    <property type="term" value="P:ventricular cardiac muscle cell differentiation"/>
    <property type="evidence" value="ECO:0000266"/>
    <property type="project" value="RGD"/>
</dbReference>
<dbReference type="FunFam" id="1.10.720.30:FF:000008">
    <property type="entry name" value="Myocardin"/>
    <property type="match status" value="1"/>
</dbReference>
<dbReference type="Gene3D" id="6.10.140.2040">
    <property type="match status" value="1"/>
</dbReference>
<dbReference type="Gene3D" id="6.10.150.10">
    <property type="match status" value="1"/>
</dbReference>
<dbReference type="Gene3D" id="1.10.720.30">
    <property type="entry name" value="SAP domain"/>
    <property type="match status" value="1"/>
</dbReference>
<dbReference type="InterPro" id="IPR043451">
    <property type="entry name" value="Myocardin-like"/>
</dbReference>
<dbReference type="InterPro" id="IPR004018">
    <property type="entry name" value="RPEL_repeat"/>
</dbReference>
<dbReference type="InterPro" id="IPR003034">
    <property type="entry name" value="SAP_dom"/>
</dbReference>
<dbReference type="InterPro" id="IPR036361">
    <property type="entry name" value="SAP_dom_sf"/>
</dbReference>
<dbReference type="PANTHER" id="PTHR22793:SF11">
    <property type="entry name" value="MYOCARDIN"/>
    <property type="match status" value="1"/>
</dbReference>
<dbReference type="PANTHER" id="PTHR22793">
    <property type="entry name" value="MYOCARDIN-RELATED TRANSCRIPTION FACTOR-RELATED"/>
    <property type="match status" value="1"/>
</dbReference>
<dbReference type="Pfam" id="PF02755">
    <property type="entry name" value="RPEL"/>
    <property type="match status" value="1"/>
</dbReference>
<dbReference type="Pfam" id="PF02037">
    <property type="entry name" value="SAP"/>
    <property type="match status" value="1"/>
</dbReference>
<dbReference type="SMART" id="SM00707">
    <property type="entry name" value="RPEL"/>
    <property type="match status" value="3"/>
</dbReference>
<dbReference type="SMART" id="SM00513">
    <property type="entry name" value="SAP"/>
    <property type="match status" value="1"/>
</dbReference>
<dbReference type="SUPFAM" id="SSF68906">
    <property type="entry name" value="SAP domain"/>
    <property type="match status" value="1"/>
</dbReference>
<dbReference type="PROSITE" id="PS51073">
    <property type="entry name" value="RPEL"/>
    <property type="match status" value="3"/>
</dbReference>
<dbReference type="PROSITE" id="PS50800">
    <property type="entry name" value="SAP"/>
    <property type="match status" value="1"/>
</dbReference>
<gene>
    <name type="primary">Myocd</name>
    <name type="synonym">Mycd</name>
</gene>
<protein>
    <recommendedName>
        <fullName>Myocardin</fullName>
    </recommendedName>
</protein>
<proteinExistence type="evidence at protein level"/>
<name>MYCD_RAT</name>
<comment type="function">
    <text evidence="1 9">Smooth muscle cells (SM) and cardiac muscle cells-specific transcriptional factor which uses the canonical single or multiple CArG boxes DNA sequence. Acts as a cofactor of serum response factor (SRF) with the potential to modulate SRF-target genes (By similarity). Plays a crucial role in cardiogenesis, urinary bladder development, and differentiation of the smooth muscle cell lineage (myogenesis) (By similarity). Positively regulates the transcription of genes involved in vascular smooth muscle contraction (PubMed:19237536).</text>
</comment>
<comment type="subunit">
    <text evidence="2 3 9">Homodimer. Interacts with MLLT7/FOXO4. Interacts with SRF, its association does not depend on specific DNA sequences for ternary complex formation (By similarity). Interacts (via C-terminal) with EP300 (via the CREB-binding domain). Interacts with HDAC4 and HDAC5 (By similarity). Interacts with MEF2C (By similarity). Interacts (via C-terminus) with STUB1/CHIP (PubMed:19237536). Interacts with PURB (By similarity).</text>
</comment>
<comment type="subcellular location">
    <subcellularLocation>
        <location evidence="7 9">Nucleus</location>
    </subcellularLocation>
</comment>
<comment type="tissue specificity">
    <text evidence="10">Abundantly expressed in the heart, aorta media and bladder, weakly expressed in the stomach, intestine and lung.</text>
</comment>
<comment type="domain">
    <text evidence="1">The C-terminal region contains a general transcription activation domain. The N-terminal region, comprising a basic and a Gln-rich domain, confers transcriptional potency and specificity by mediating association with the MADS box of SRF. The basic domain may be required for nuclear localization. The SAP domain is important for transactivation and ternary complex formation (By similarity).</text>
</comment>
<comment type="PTM">
    <text evidence="9">Ubiquitinated; by STUB1/CHIP at the C-terminus, leading to its degradation by the proteasome (PubMed:19237536). Phosphorylation by GSK3B is required for STUB1/CHIP-mediated ubiquitination (PubMed:19237536).</text>
</comment>
<comment type="PTM">
    <text evidence="3 9">Phosphorylation negatively regulates transcriptional activity (By similarity). Phosphorylated; by GSK3B (PubMed:19237536).</text>
</comment>
<feature type="chain" id="PRO_0000126633" description="Myocardin">
    <location>
        <begin position="1"/>
        <end position="938"/>
    </location>
</feature>
<feature type="repeat" description="RPEL 1">
    <location>
        <begin position="18"/>
        <end position="43"/>
    </location>
</feature>
<feature type="repeat" description="RPEL 2">
    <location>
        <begin position="62"/>
        <end position="87"/>
    </location>
</feature>
<feature type="repeat" description="RPEL 3">
    <location>
        <begin position="106"/>
        <end position="131"/>
    </location>
</feature>
<feature type="domain" description="SAP" evidence="5">
    <location>
        <begin position="383"/>
        <end position="417"/>
    </location>
</feature>
<feature type="region of interest" description="Disordered" evidence="6">
    <location>
        <begin position="37"/>
        <end position="64"/>
    </location>
</feature>
<feature type="region of interest" description="HDAC5-binding" evidence="1">
    <location>
        <begin position="153"/>
        <end position="205"/>
    </location>
</feature>
<feature type="region of interest" description="Disordered" evidence="6">
    <location>
        <begin position="155"/>
        <end position="282"/>
    </location>
</feature>
<feature type="region of interest" description="Disordered" evidence="6">
    <location>
        <begin position="339"/>
        <end position="381"/>
    </location>
</feature>
<feature type="region of interest" description="Disordered" evidence="6">
    <location>
        <begin position="501"/>
        <end position="521"/>
    </location>
</feature>
<feature type="region of interest" description="Disordered" evidence="6">
    <location>
        <begin position="586"/>
        <end position="606"/>
    </location>
</feature>
<feature type="region of interest" description="Disordered" evidence="6">
    <location>
        <begin position="667"/>
        <end position="734"/>
    </location>
</feature>
<feature type="region of interest" description="Required for interaction with and ubiquitination by STUB1" evidence="3">
    <location>
        <begin position="717"/>
        <end position="938"/>
    </location>
</feature>
<feature type="coiled-coil region" evidence="4">
    <location>
        <begin position="522"/>
        <end position="566"/>
    </location>
</feature>
<feature type="short sequence motif" description="MEF2C-binding" evidence="1">
    <location>
        <begin position="12"/>
        <end position="27"/>
    </location>
</feature>
<feature type="compositionally biased region" description="Basic and acidic residues" evidence="6">
    <location>
        <begin position="46"/>
        <end position="64"/>
    </location>
</feature>
<feature type="compositionally biased region" description="Polar residues" evidence="6">
    <location>
        <begin position="210"/>
        <end position="221"/>
    </location>
</feature>
<feature type="compositionally biased region" description="Basic residues" evidence="6">
    <location>
        <begin position="248"/>
        <end position="265"/>
    </location>
</feature>
<feature type="compositionally biased region" description="Low complexity" evidence="6">
    <location>
        <begin position="345"/>
        <end position="360"/>
    </location>
</feature>
<feature type="compositionally biased region" description="Polar residues" evidence="6">
    <location>
        <begin position="361"/>
        <end position="372"/>
    </location>
</feature>
<feature type="compositionally biased region" description="Polar residues" evidence="6">
    <location>
        <begin position="588"/>
        <end position="600"/>
    </location>
</feature>
<feature type="compositionally biased region" description="Polar residues" evidence="6">
    <location>
        <begin position="667"/>
        <end position="694"/>
    </location>
</feature>
<feature type="compositionally biased region" description="Polar residues" evidence="6">
    <location>
        <begin position="701"/>
        <end position="713"/>
    </location>
</feature>
<feature type="modified residue" description="Phosphoserine; by GSK3-beta" evidence="3">
    <location>
        <position position="457"/>
    </location>
</feature>
<feature type="modified residue" description="Phosphoserine; by GSK3-beta" evidence="3">
    <location>
        <position position="461"/>
    </location>
</feature>
<feature type="modified residue" description="Phosphoserine; by GSK3-beta" evidence="3">
    <location>
        <position position="465"/>
    </location>
</feature>
<feature type="modified residue" description="Phosphoserine; by GSK3-beta" evidence="3">
    <location>
        <position position="469"/>
    </location>
</feature>
<feature type="modified residue" description="Phosphoserine; by GSK3-beta" evidence="3">
    <location>
        <position position="627"/>
    </location>
</feature>
<feature type="modified residue" description="Phosphoserine; by GSK3-beta" evidence="3">
    <location>
        <position position="631"/>
    </location>
</feature>
<feature type="modified residue" description="Phosphoserine; by GSK3-beta" evidence="3">
    <location>
        <position position="635"/>
    </location>
</feature>
<feature type="modified residue" description="Phosphoserine; by GSK3-beta" evidence="3">
    <location>
        <position position="639"/>
    </location>
</feature>
<feature type="modified residue" description="Phosphoserine; by MAPK1 and MAPK3" evidence="3">
    <location>
        <position position="815"/>
    </location>
</feature>
<feature type="modified residue" description="Phosphoserine; by MAPK1 and MAPK3" evidence="3">
    <location>
        <position position="862"/>
    </location>
</feature>
<feature type="modified residue" description="Phosphoserine; by MAPK1 and MAPK3" evidence="3">
    <location>
        <position position="869"/>
    </location>
</feature>
<feature type="modified residue" description="Phosphothreonine; by MAPK1 and MAPK3" evidence="3">
    <location>
        <position position="896"/>
    </location>
</feature>
<feature type="mutagenesis site" description="Abolishes homodimerization." evidence="8">
    <original>I</original>
    <variation>T</variation>
    <location>
        <position position="534"/>
    </location>
</feature>
<feature type="mutagenesis site" description="Abolishes homodimerization." evidence="8">
    <original>L</original>
    <variation>T</variation>
    <location>
        <position position="537"/>
    </location>
</feature>
<feature type="mutagenesis site" description="Abolishes homodimerization." evidence="8">
    <original>L</original>
    <variation>T</variation>
    <location>
        <position position="541"/>
    </location>
</feature>
<evidence type="ECO:0000250" key="1"/>
<evidence type="ECO:0000250" key="2">
    <source>
        <dbReference type="UniProtKB" id="Q8IZQ8"/>
    </source>
</evidence>
<evidence type="ECO:0000250" key="3">
    <source>
        <dbReference type="UniProtKB" id="Q8VIM5"/>
    </source>
</evidence>
<evidence type="ECO:0000255" key="4"/>
<evidence type="ECO:0000255" key="5">
    <source>
        <dbReference type="PROSITE-ProRule" id="PRU00186"/>
    </source>
</evidence>
<evidence type="ECO:0000256" key="6">
    <source>
        <dbReference type="SAM" id="MobiDB-lite"/>
    </source>
</evidence>
<evidence type="ECO:0000269" key="7">
    <source>
    </source>
</evidence>
<evidence type="ECO:0000269" key="8">
    <source>
    </source>
</evidence>
<evidence type="ECO:0000269" key="9">
    <source>
    </source>
</evidence>
<evidence type="ECO:0000269" key="10">
    <source>
    </source>
</evidence>
<keyword id="KW-0010">Activator</keyword>
<keyword id="KW-0175">Coiled coil</keyword>
<keyword id="KW-0539">Nucleus</keyword>
<keyword id="KW-0597">Phosphoprotein</keyword>
<keyword id="KW-1185">Reference proteome</keyword>
<keyword id="KW-0677">Repeat</keyword>
<keyword id="KW-0804">Transcription</keyword>
<keyword id="KW-0805">Transcription regulation</keyword>
<keyword id="KW-0832">Ubl conjugation</keyword>
<organism>
    <name type="scientific">Rattus norvegicus</name>
    <name type="common">Rat</name>
    <dbReference type="NCBI Taxonomy" id="10116"/>
    <lineage>
        <taxon>Eukaryota</taxon>
        <taxon>Metazoa</taxon>
        <taxon>Chordata</taxon>
        <taxon>Craniata</taxon>
        <taxon>Vertebrata</taxon>
        <taxon>Euteleostomi</taxon>
        <taxon>Mammalia</taxon>
        <taxon>Eutheria</taxon>
        <taxon>Euarchontoglires</taxon>
        <taxon>Glires</taxon>
        <taxon>Rodentia</taxon>
        <taxon>Myomorpha</taxon>
        <taxon>Muroidea</taxon>
        <taxon>Muridae</taxon>
        <taxon>Murinae</taxon>
        <taxon>Rattus</taxon>
    </lineage>
</organism>
<accession>Q8R5I7</accession>
<accession>Q7M6Y4</accession>
<accession>Q8R5I8</accession>
<sequence length="938" mass="101872">MTLLGSEHSLLIRRKFRSVLQLRLQQRRTQEQLANQGLIPPLKSPTEFHDPRKKLDSAKTEDSLRRKVRNRSDRASLVNMHILQASTAERSIPTAQMKLKRARLADDLNEKIALRPGPLELVEKNILPMDSSVKEAIKGTEVSLSKAADAFAFEDDSSRDGLSPDQARSEDPQGSGGSTPDIKSTEAPLAGPLDTIQDLTPGSESDKNDTASQLSNQSDSGKQVLGPLSTPIPVHTAVKSKSLGDSKNRHKKPKDPKPKVKKLKYHQYIPPDQKAEKSPPPMDSAYARLLQQQQLFLQLQILSQQQQQQQQQQQQQQQQQQQQRFSYPGMHQAHLKEPNEQMTRNPNSSSTPLNNTPLSPVKNSLSGQTGVSSLKPGPLPPNLDDLKVSELRQQLRIRGLPVSGTKTALVDRLRPFQDCAGNPVPNFGDITTVTFPVTPNTLPSYQSSPSGFYHFGSTSSSPPISPASSDLSAAGSLPDTFTDASPGFGLHASPVPACTDESLLSSLNGGSGPSEPDGLDSEKDKMLVEKQKVINQLTWKLRQEQRQVEELRMQLQKQKSGCNDQKPLPFLATTIKQEDVSSCPFAAQQASGKGQGHSSDSPPPACETAQLLPHCVESSGQTHVLSSTFLSPQCSPQHSPLGTLKSPQHISLPPSPNNHYFLASSSGAQRENHGVSSPNSSQGCAQMTGLQSSDKVGPTFSIPSPTFPKSSPTVPEITQPPSYEDAVKQQMTRSQQMDELLDVLIESGEMPADAREDHSCLQKIPKIPGSSCSPTTILPKSSASFEQASSGGQISFDHYATDSEEHLEVLLNSHSPIGKVSDVTLLKIGSEEPPFDGIMDGFPGKAAEDLFSAHELLPGPLSPMHTQLSPPSVDSSGLQLSFTESPWETMEWLDLTPPSSTPGFSNLTSSGPSIFNIDFLDVTDLNLNSPMDLHLQQW</sequence>
<reference key="1">
    <citation type="journal article" date="2002" name="J. Mol. Cell. Cardiol.">
        <title>Myocardin: a component of a molecular switch for smooth muscle differentiation.</title>
        <authorList>
            <person name="Chen J."/>
            <person name="Kitchen C.M."/>
            <person name="Streb J.W."/>
            <person name="Miano J.M."/>
        </authorList>
    </citation>
    <scope>NUCLEOTIDE SEQUENCE [MRNA]</scope>
    <scope>SUBCELLULAR LOCATION</scope>
    <source>
        <strain>Sprague-Dawley</strain>
        <tissue>Aorta</tissue>
    </source>
</reference>
<reference key="2">
    <citation type="journal article" date="2003" name="Circ. Res.">
        <title>Myocardin is a key regulator of CArG-dependent transcription of multiple smooth muscle marker genes.</title>
        <authorList>
            <person name="Yoshida T."/>
            <person name="Sinha S."/>
            <person name="Dandre F."/>
            <person name="Wamhoff B.R."/>
            <person name="Hoofnagle M.H."/>
            <person name="Kremer B.E."/>
            <person name="Wang D.-Z."/>
            <person name="Olson E.N."/>
            <person name="Owens G.K."/>
        </authorList>
    </citation>
    <scope>NUCLEOTIDE SEQUENCE [MRNA] OF 251-399</scope>
    <source>
        <tissue>Aorta</tissue>
    </source>
</reference>
<reference key="3">
    <citation type="journal article" date="2003" name="Proc. Natl. Acad. Sci. U.S.A.">
        <title>Myocardin is a master regulator of smooth muscle gene expression.</title>
        <authorList>
            <person name="Wang Z."/>
            <person name="Wang D.-Z."/>
            <person name="Pipes G.C."/>
            <person name="Olson E.N."/>
        </authorList>
    </citation>
    <scope>SUBUNIT</scope>
    <scope>MUTAGENESIS OF ILE-534; LEU-537 AND LEU-541</scope>
</reference>
<reference key="4">
    <citation type="journal article" date="2009" name="Mol. Cell. Biol.">
        <title>CHIP represses myocardin-induced smooth muscle cell differentiation via ubiquitin-mediated proteasomal degradation.</title>
        <authorList>
            <person name="Xie P."/>
            <person name="Fan Y."/>
            <person name="Zhang H."/>
            <person name="Zhang Y."/>
            <person name="She M."/>
            <person name="Gu D."/>
            <person name="Patterson C."/>
            <person name="Li H."/>
        </authorList>
    </citation>
    <scope>FUNCTION</scope>
    <scope>INTERACTION WITH STUB1</scope>
    <scope>SUBCELLULAR LOCATION</scope>
    <scope>UBIQUITINATION</scope>
    <scope>PHOSPHORYLATION</scope>
</reference>
<reference key="5">
    <citation type="journal article" date="2010" name="Gene">
        <title>Expression and functional activity of four myocardin isoforms.</title>
        <authorList>
            <person name="Imamura M."/>
            <person name="Long X."/>
            <person name="Nanda V."/>
            <person name="Miano J.M."/>
        </authorList>
    </citation>
    <scope>TISSUE SPECIFICITY</scope>
</reference>